<organism>
    <name type="scientific">Homo sapiens</name>
    <name type="common">Human</name>
    <dbReference type="NCBI Taxonomy" id="9606"/>
    <lineage>
        <taxon>Eukaryota</taxon>
        <taxon>Metazoa</taxon>
        <taxon>Chordata</taxon>
        <taxon>Craniata</taxon>
        <taxon>Vertebrata</taxon>
        <taxon>Euteleostomi</taxon>
        <taxon>Mammalia</taxon>
        <taxon>Eutheria</taxon>
        <taxon>Euarchontoglires</taxon>
        <taxon>Primates</taxon>
        <taxon>Haplorrhini</taxon>
        <taxon>Catarrhini</taxon>
        <taxon>Hominidae</taxon>
        <taxon>Homo</taxon>
    </lineage>
</organism>
<accession>P42285</accession>
<accession>Q2M386</accession>
<accession>Q6MZZ8</accession>
<accession>Q6P170</accession>
<accession>Q8N5R0</accession>
<accession>Q8TAG2</accession>
<feature type="initiator methionine" description="Removed" evidence="22 33 35">
    <location>
        <position position="1"/>
    </location>
</feature>
<feature type="chain" id="PRO_0000102094" description="Exosome RNA helicase MTR4">
    <location>
        <begin position="2"/>
        <end position="1042"/>
    </location>
</feature>
<feature type="domain" description="Helicase ATP-binding" evidence="2">
    <location>
        <begin position="148"/>
        <end position="304"/>
    </location>
</feature>
<feature type="domain" description="Helicase C-terminal" evidence="3">
    <location>
        <begin position="405"/>
        <end position="577"/>
    </location>
</feature>
<feature type="region of interest" description="Disordered" evidence="4">
    <location>
        <begin position="16"/>
        <end position="74"/>
    </location>
</feature>
<feature type="short sequence motif" description="DEIH box">
    <location>
        <begin position="252"/>
        <end position="255"/>
    </location>
</feature>
<feature type="compositionally biased region" description="Basic and acidic residues" evidence="4">
    <location>
        <begin position="23"/>
        <end position="33"/>
    </location>
</feature>
<feature type="compositionally biased region" description="Basic and acidic residues" evidence="4">
    <location>
        <begin position="43"/>
        <end position="52"/>
    </location>
</feature>
<feature type="binding site" evidence="21 32">
    <location>
        <position position="139"/>
    </location>
    <ligand>
        <name>ATP</name>
        <dbReference type="ChEBI" id="CHEBI:30616"/>
    </ligand>
</feature>
<feature type="binding site" evidence="2">
    <location>
        <begin position="161"/>
        <end position="168"/>
    </location>
    <ligand>
        <name>ATP</name>
        <dbReference type="ChEBI" id="CHEBI:30616"/>
    </ligand>
</feature>
<feature type="binding site" evidence="16 21 27 32">
    <location>
        <position position="164"/>
    </location>
    <ligand>
        <name>ATP</name>
        <dbReference type="ChEBI" id="CHEBI:30616"/>
    </ligand>
</feature>
<feature type="binding site" evidence="16 21 27 32">
    <location>
        <position position="166"/>
    </location>
    <ligand>
        <name>ATP</name>
        <dbReference type="ChEBI" id="CHEBI:30616"/>
    </ligand>
</feature>
<feature type="binding site" evidence="16 21 27 32">
    <location>
        <position position="167"/>
    </location>
    <ligand>
        <name>ATP</name>
        <dbReference type="ChEBI" id="CHEBI:30616"/>
    </ligand>
</feature>
<feature type="binding site" evidence="16 21 27 32">
    <location>
        <position position="168"/>
    </location>
    <ligand>
        <name>ATP</name>
        <dbReference type="ChEBI" id="CHEBI:30616"/>
    </ligand>
</feature>
<feature type="modified residue" description="N-acetylalanine" evidence="22 33 35">
    <location>
        <position position="2"/>
    </location>
</feature>
<feature type="modified residue" description="Phosphoserine" evidence="36">
    <location>
        <position position="40"/>
    </location>
</feature>
<feature type="modified residue" description="N6-acetyllysine" evidence="34">
    <location>
        <position position="51"/>
    </location>
</feature>
<feature type="modified residue" description="N6-acetyllysine" evidence="1">
    <location>
        <position position="78"/>
    </location>
</feature>
<feature type="cross-link" description="Glycyl lysine isopeptide (Lys-Gly) (interchain with G-Cter in SUMO2)" evidence="38">
    <location>
        <position position="24"/>
    </location>
</feature>
<feature type="cross-link" description="Glycyl lysine isopeptide (Lys-Gly) (interchain with G-Cter in SUMO2)" evidence="38">
    <location>
        <position position="358"/>
    </location>
</feature>
<feature type="cross-link" description="Glycyl lysine isopeptide (Lys-Gly) (interchain with G-Cter in SUMO2)" evidence="37 38">
    <location>
        <position position="684"/>
    </location>
</feature>
<feature type="cross-link" description="Glycyl lysine isopeptide (Lys-Gly) (interchain with G-Cter in SUMO2)" evidence="38">
    <location>
        <position position="723"/>
    </location>
</feature>
<feature type="sequence variant" id="VAR_049343" description="In dbSNP:rs35643285.">
    <original>A</original>
    <variation>P</variation>
    <location>
        <position position="346"/>
    </location>
</feature>
<feature type="mutagenesis site" description="Abolishes RNA helicase activity." evidence="16">
    <original>E</original>
    <variation>Q</variation>
    <location>
        <position position="253"/>
    </location>
</feature>
<feature type="mutagenesis site" description="Decreased interaction with NRDE2." evidence="20">
    <original>R</original>
    <variation>A</variation>
    <location>
        <position position="658"/>
    </location>
</feature>
<feature type="mutagenesis site" description="Decreased interaction with NRDE2." evidence="20">
    <original>E</original>
    <variation>R</variation>
    <location>
        <position position="697"/>
    </location>
</feature>
<feature type="mutagenesis site" description="Decreased interaction with NRDE2. Impairs the binding of both NVL and NOP53." evidence="20 21">
    <original>R</original>
    <variation>E</variation>
    <location>
        <position position="743"/>
    </location>
</feature>
<feature type="mutagenesis site" description="Loss of interaction with NRDE2." evidence="20">
    <original>FE</original>
    <variation>AK</variation>
    <location>
        <begin position="989"/>
        <end position="990"/>
    </location>
</feature>
<feature type="sequence conflict" description="In Ref. 5; AAH14669." evidence="25" ref="5">
    <original>N</original>
    <variation>K</variation>
    <location>
        <position position="342"/>
    </location>
</feature>
<feature type="sequence conflict" description="In Ref. 4; CAE45877." evidence="25" ref="4">
    <original>E</original>
    <variation>G</variation>
    <location>
        <position position="722"/>
    </location>
</feature>
<feature type="sequence conflict" description="In Ref. 5; AAH28604." evidence="25" ref="5">
    <original>L</original>
    <variation>I</variation>
    <location>
        <position position="900"/>
    </location>
</feature>
<feature type="sequence conflict" description="In Ref. 4; CAE45877." evidence="25" ref="4">
    <original>Q</original>
    <variation>R</variation>
    <location>
        <position position="927"/>
    </location>
</feature>
<feature type="strand" evidence="39">
    <location>
        <begin position="99"/>
        <end position="104"/>
    </location>
</feature>
<feature type="strand" evidence="39">
    <location>
        <begin position="107"/>
        <end position="109"/>
    </location>
</feature>
<feature type="strand" evidence="39">
    <location>
        <begin position="111"/>
        <end position="117"/>
    </location>
</feature>
<feature type="helix" evidence="39">
    <location>
        <begin position="142"/>
        <end position="152"/>
    </location>
</feature>
<feature type="strand" evidence="39">
    <location>
        <begin position="156"/>
        <end position="160"/>
    </location>
</feature>
<feature type="helix" evidence="43">
    <location>
        <begin position="163"/>
        <end position="165"/>
    </location>
</feature>
<feature type="helix" evidence="39">
    <location>
        <begin position="168"/>
        <end position="180"/>
    </location>
</feature>
<feature type="strand" evidence="39">
    <location>
        <begin position="184"/>
        <end position="191"/>
    </location>
</feature>
<feature type="helix" evidence="39">
    <location>
        <begin position="192"/>
        <end position="206"/>
    </location>
</feature>
<feature type="strand" evidence="39">
    <location>
        <begin position="209"/>
        <end position="212"/>
    </location>
</feature>
<feature type="strand" evidence="39">
    <location>
        <begin position="223"/>
        <end position="228"/>
    </location>
</feature>
<feature type="helix" evidence="39">
    <location>
        <begin position="229"/>
        <end position="237"/>
    </location>
</feature>
<feature type="helix" evidence="39">
    <location>
        <begin position="241"/>
        <end position="243"/>
    </location>
</feature>
<feature type="strand" evidence="39">
    <location>
        <begin position="246"/>
        <end position="251"/>
    </location>
</feature>
<feature type="helix" evidence="39">
    <location>
        <begin position="254"/>
        <end position="256"/>
    </location>
</feature>
<feature type="turn" evidence="39">
    <location>
        <begin position="257"/>
        <end position="261"/>
    </location>
</feature>
<feature type="helix" evidence="39">
    <location>
        <begin position="263"/>
        <end position="272"/>
    </location>
</feature>
<feature type="strand" evidence="39">
    <location>
        <begin position="278"/>
        <end position="284"/>
    </location>
</feature>
<feature type="helix" evidence="39">
    <location>
        <begin position="289"/>
        <end position="300"/>
    </location>
</feature>
<feature type="strand" evidence="39">
    <location>
        <begin position="304"/>
        <end position="308"/>
    </location>
</feature>
<feature type="strand" evidence="39">
    <location>
        <begin position="316"/>
        <end position="322"/>
    </location>
</feature>
<feature type="strand" evidence="39">
    <location>
        <begin position="329"/>
        <end position="332"/>
    </location>
</feature>
<feature type="helix" evidence="39">
    <location>
        <begin position="340"/>
        <end position="348"/>
    </location>
</feature>
<feature type="turn" evidence="42">
    <location>
        <begin position="355"/>
        <end position="357"/>
    </location>
</feature>
<feature type="helix" evidence="39">
    <location>
        <begin position="371"/>
        <end position="383"/>
    </location>
</feature>
<feature type="strand" evidence="39">
    <location>
        <begin position="388"/>
        <end position="392"/>
    </location>
</feature>
<feature type="helix" evidence="39">
    <location>
        <begin position="396"/>
        <end position="405"/>
    </location>
</feature>
<feature type="helix" evidence="39">
    <location>
        <begin position="406"/>
        <end position="408"/>
    </location>
</feature>
<feature type="helix" evidence="39">
    <location>
        <begin position="414"/>
        <end position="428"/>
    </location>
</feature>
<feature type="helix" evidence="39">
    <location>
        <begin position="433"/>
        <end position="436"/>
    </location>
</feature>
<feature type="helix" evidence="39">
    <location>
        <begin position="439"/>
        <end position="449"/>
    </location>
</feature>
<feature type="strand" evidence="39">
    <location>
        <begin position="452"/>
        <end position="455"/>
    </location>
</feature>
<feature type="strand" evidence="41">
    <location>
        <begin position="457"/>
        <end position="459"/>
    </location>
</feature>
<feature type="helix" evidence="39">
    <location>
        <begin position="461"/>
        <end position="472"/>
    </location>
</feature>
<feature type="strand" evidence="39">
    <location>
        <begin position="477"/>
        <end position="481"/>
    </location>
</feature>
<feature type="helix" evidence="39">
    <location>
        <begin position="483"/>
        <end position="487"/>
    </location>
</feature>
<feature type="strand" evidence="39">
    <location>
        <begin position="488"/>
        <end position="490"/>
    </location>
</feature>
<feature type="strand" evidence="39">
    <location>
        <begin position="493"/>
        <end position="499"/>
    </location>
</feature>
<feature type="strand" evidence="39">
    <location>
        <begin position="501"/>
        <end position="504"/>
    </location>
</feature>
<feature type="strand" evidence="39">
    <location>
        <begin position="509"/>
        <end position="511"/>
    </location>
</feature>
<feature type="helix" evidence="39">
    <location>
        <begin position="514"/>
        <end position="521"/>
    </location>
</feature>
<feature type="turn" evidence="39">
    <location>
        <begin position="527"/>
        <end position="529"/>
    </location>
</feature>
<feature type="strand" evidence="39">
    <location>
        <begin position="531"/>
        <end position="539"/>
    </location>
</feature>
<feature type="helix" evidence="39">
    <location>
        <begin position="545"/>
        <end position="553"/>
    </location>
</feature>
<feature type="helix" evidence="39">
    <location>
        <begin position="567"/>
        <end position="575"/>
    </location>
</feature>
<feature type="strand" evidence="42">
    <location>
        <begin position="576"/>
        <end position="578"/>
    </location>
</feature>
<feature type="helix" evidence="39">
    <location>
        <begin position="581"/>
        <end position="587"/>
    </location>
</feature>
<feature type="helix" evidence="39">
    <location>
        <begin position="589"/>
        <end position="597"/>
    </location>
</feature>
<feature type="helix" evidence="41">
    <location>
        <begin position="598"/>
        <end position="604"/>
    </location>
</feature>
<feature type="helix" evidence="41">
    <location>
        <begin position="608"/>
        <end position="614"/>
    </location>
</feature>
<feature type="helix" evidence="41">
    <location>
        <begin position="623"/>
        <end position="644"/>
    </location>
</feature>
<feature type="helix" evidence="41">
    <location>
        <begin position="647"/>
        <end position="650"/>
    </location>
</feature>
<feature type="helix" evidence="41">
    <location>
        <begin position="651"/>
        <end position="653"/>
    </location>
</feature>
<feature type="strand" evidence="41">
    <location>
        <begin position="658"/>
        <end position="664"/>
    </location>
</feature>
<feature type="strand" evidence="41">
    <location>
        <begin position="667"/>
        <end position="680"/>
    </location>
</feature>
<feature type="strand" evidence="41">
    <location>
        <begin position="693"/>
        <end position="702"/>
    </location>
</feature>
<feature type="helix" evidence="41">
    <location>
        <begin position="704"/>
        <end position="707"/>
    </location>
</feature>
<feature type="strand" evidence="42">
    <location>
        <begin position="720"/>
        <end position="722"/>
    </location>
</feature>
<feature type="strand" evidence="41">
    <location>
        <begin position="725"/>
        <end position="732"/>
    </location>
</feature>
<feature type="helix" evidence="41">
    <location>
        <begin position="733"/>
        <end position="735"/>
    </location>
</feature>
<feature type="strand" evidence="41">
    <location>
        <begin position="736"/>
        <end position="743"/>
    </location>
</feature>
<feature type="helix" evidence="41">
    <location>
        <begin position="753"/>
        <end position="769"/>
    </location>
</feature>
<feature type="turn" evidence="41">
    <location>
        <begin position="779"/>
        <end position="782"/>
    </location>
</feature>
<feature type="helix" evidence="41">
    <location>
        <begin position="788"/>
        <end position="806"/>
    </location>
</feature>
<feature type="helix" evidence="41">
    <location>
        <begin position="808"/>
        <end position="811"/>
    </location>
</feature>
<feature type="strand" evidence="41">
    <location>
        <begin position="812"/>
        <end position="814"/>
    </location>
</feature>
<feature type="helix" evidence="41">
    <location>
        <begin position="815"/>
        <end position="840"/>
    </location>
</feature>
<feature type="turn" evidence="41">
    <location>
        <begin position="841"/>
        <end position="843"/>
    </location>
</feature>
<feature type="helix" evidence="39">
    <location>
        <begin position="848"/>
        <end position="860"/>
    </location>
</feature>
<feature type="strand" evidence="40">
    <location>
        <begin position="863"/>
        <end position="865"/>
    </location>
</feature>
<feature type="turn" evidence="40">
    <location>
        <begin position="866"/>
        <end position="868"/>
    </location>
</feature>
<feature type="helix" evidence="39">
    <location>
        <begin position="872"/>
        <end position="877"/>
    </location>
</feature>
<feature type="helix" evidence="39">
    <location>
        <begin position="885"/>
        <end position="894"/>
    </location>
</feature>
<feature type="turn" evidence="39">
    <location>
        <begin position="895"/>
        <end position="899"/>
    </location>
</feature>
<feature type="helix" evidence="39">
    <location>
        <begin position="902"/>
        <end position="909"/>
    </location>
</feature>
<feature type="helix" evidence="39">
    <location>
        <begin position="910"/>
        <end position="912"/>
    </location>
</feature>
<feature type="helix" evidence="39">
    <location>
        <begin position="926"/>
        <end position="948"/>
    </location>
</feature>
<feature type="helix" evidence="39">
    <location>
        <begin position="955"/>
        <end position="960"/>
    </location>
</feature>
<feature type="helix" evidence="39">
    <location>
        <begin position="967"/>
        <end position="974"/>
    </location>
</feature>
<feature type="helix" evidence="39">
    <location>
        <begin position="979"/>
        <end position="983"/>
    </location>
</feature>
<feature type="strand" evidence="43">
    <location>
        <begin position="985"/>
        <end position="988"/>
    </location>
</feature>
<feature type="helix" evidence="39">
    <location>
        <begin position="990"/>
        <end position="1013"/>
    </location>
</feature>
<feature type="helix" evidence="39">
    <location>
        <begin position="1017"/>
        <end position="1030"/>
    </location>
</feature>
<feature type="helix" evidence="39">
    <location>
        <begin position="1033"/>
        <end position="1036"/>
    </location>
</feature>
<reference key="1">
    <citation type="journal article" date="1994" name="DNA Res.">
        <title>Prediction of the coding sequences of unidentified human genes. II. The coding sequences of 40 new genes (KIAA0041-KIAA0080) deduced by analysis of cDNA clones from human cell line KG-1.</title>
        <authorList>
            <person name="Nomura N."/>
            <person name="Nagase T."/>
            <person name="Miyajima N."/>
            <person name="Sazuka T."/>
            <person name="Tanaka A."/>
            <person name="Sato S."/>
            <person name="Seki N."/>
            <person name="Kawarabayasi Y."/>
            <person name="Ishikawa K."/>
            <person name="Tabata S."/>
        </authorList>
    </citation>
    <scope>NUCLEOTIDE SEQUENCE [LARGE SCALE MRNA]</scope>
    <source>
        <tissue>Myelomonocyte</tissue>
    </source>
</reference>
<reference key="2">
    <citation type="submission" date="2001-10" db="EMBL/GenBank/DDBJ databases">
        <authorList>
            <person name="Ohara O."/>
            <person name="Nagase T."/>
            <person name="Kikuno R."/>
            <person name="Nomura N."/>
        </authorList>
    </citation>
    <scope>SEQUENCE REVISION TO C-TERMINUS</scope>
</reference>
<reference key="3">
    <citation type="journal article" date="2006" name="Biochem. Biophys. Res. Commun.">
        <title>The AAA-ATPase NVL2 is a component of pre-ribosomal particles that interacts with the DExD/H-box RNA helicase DOB1.</title>
        <authorList>
            <person name="Nagahama M."/>
            <person name="Yamazoe T."/>
            <person name="Hara Y."/>
            <person name="Tani K."/>
            <person name="Tsuji A."/>
            <person name="Tagaya M."/>
        </authorList>
    </citation>
    <scope>NUCLEOTIDE SEQUENCE [MRNA]</scope>
    <scope>SUBCELLULAR LOCATION</scope>
    <scope>INTERACTION WITH NVL</scope>
    <source>
        <tissue>Kidney</tissue>
    </source>
</reference>
<reference key="4">
    <citation type="journal article" date="2007" name="BMC Genomics">
        <title>The full-ORF clone resource of the German cDNA consortium.</title>
        <authorList>
            <person name="Bechtel S."/>
            <person name="Rosenfelder H."/>
            <person name="Duda A."/>
            <person name="Schmidt C.P."/>
            <person name="Ernst U."/>
            <person name="Wellenreuther R."/>
            <person name="Mehrle A."/>
            <person name="Schuster C."/>
            <person name="Bahr A."/>
            <person name="Bloecker H."/>
            <person name="Heubner D."/>
            <person name="Hoerlein A."/>
            <person name="Michel G."/>
            <person name="Wedler H."/>
            <person name="Koehrer K."/>
            <person name="Ottenwaelder B."/>
            <person name="Poustka A."/>
            <person name="Wiemann S."/>
            <person name="Schupp I."/>
        </authorList>
    </citation>
    <scope>NUCLEOTIDE SEQUENCE [LARGE SCALE MRNA]</scope>
    <source>
        <tissue>Endometrium</tissue>
    </source>
</reference>
<reference key="5">
    <citation type="journal article" date="2004" name="Genome Res.">
        <title>The status, quality, and expansion of the NIH full-length cDNA project: the Mammalian Gene Collection (MGC).</title>
        <authorList>
            <consortium name="The MGC Project Team"/>
        </authorList>
    </citation>
    <scope>NUCLEOTIDE SEQUENCE [LARGE SCALE MRNA]</scope>
    <source>
        <tissue>Hippocampus</tissue>
        <tissue>Natural killer cell</tissue>
        <tissue>Prostate</tissue>
        <tissue>Retina</tissue>
    </source>
</reference>
<reference key="6">
    <citation type="submission" date="2008-12" db="UniProtKB">
        <authorList>
            <person name="Bienvenut W.V."/>
            <person name="Lilla S."/>
            <person name="von Kriegsheim A."/>
            <person name="Lempens A."/>
            <person name="Kolch W."/>
        </authorList>
    </citation>
    <scope>PROTEIN SEQUENCE OF 2-24; 82-98; 135-145; 185-192; 340-351; 385-396; 409-418; 438-449; 451-464; 495-502; 533-542; 554-604; 681-701; 724-743; 844-852; 861-873; 924-933; 985-995 AND 1013-1022</scope>
    <scope>CLEAVAGE OF INITIATOR METHIONINE</scope>
    <scope>ACETYLATION AT ALA-2</scope>
    <scope>IDENTIFICATION BY MASS SPECTROMETRY</scope>
    <source>
        <tissue>Ovarian carcinoma</tissue>
    </source>
</reference>
<reference key="7">
    <citation type="journal article" date="2001" name="Cell">
        <title>AU binding proteins recruit the exosome to degrade ARE-containing mRNAs.</title>
        <authorList>
            <person name="Chen C.-Y."/>
            <person name="Gherzi R."/>
            <person name="Ong S.-E."/>
            <person name="Chan E.L."/>
            <person name="Raijmakers R."/>
            <person name="Pruijn G.J.M."/>
            <person name="Stoecklin G."/>
            <person name="Moroni C."/>
            <person name="Mann M."/>
            <person name="Karin M."/>
        </authorList>
    </citation>
    <scope>ASSOCIATION WITH THE RNA EXOSOME COMPLEX</scope>
    <scope>IDENTIFICATION BY MASS SPECTROMETRY</scope>
</reference>
<reference key="8">
    <citation type="journal article" date="2002" name="Mol. Biol. Cell">
        <title>Functional proteomic analysis of human nucleolus.</title>
        <authorList>
            <person name="Scherl A."/>
            <person name="Coute Y."/>
            <person name="Deon C."/>
            <person name="Calle A."/>
            <person name="Kindbeiter K."/>
            <person name="Sanchez J.-C."/>
            <person name="Greco A."/>
            <person name="Hochstrasser D.F."/>
            <person name="Diaz J.-J."/>
        </authorList>
    </citation>
    <scope>SUBCELLULAR LOCATION [LARGE SCALE ANALYSIS]</scope>
    <source>
        <tissue>Cervix carcinoma</tissue>
    </source>
</reference>
<reference key="9">
    <citation type="journal article" date="2002" name="RNA">
        <title>Purification and characterization of native spliceosomes suitable for three-dimensional structural analysis.</title>
        <authorList>
            <person name="Jurica M.S."/>
            <person name="Licklider L.J."/>
            <person name="Gygi S.P."/>
            <person name="Grigorieff N."/>
            <person name="Moore M.J."/>
        </authorList>
    </citation>
    <scope>IDENTIFICATION BY MASS SPECTROMETRY</scope>
    <scope>IDENTIFICATION IN THE SPLICEOSOMAL C COMPLEX</scope>
</reference>
<reference key="10">
    <citation type="journal article" date="2005" name="Biochem. Biophys. Res. Commun.">
        <title>Zcchc8 is a glycogen synthase kinase-3 substrate that interacts with RNA-binding proteins.</title>
        <authorList>
            <person name="Gustafson M.P."/>
            <person name="Welcker M."/>
            <person name="Hwang H.C."/>
            <person name="Clurman B.E."/>
        </authorList>
    </citation>
    <scope>INTERACTION WITH ZCCHC8</scope>
</reference>
<reference key="11">
    <citation type="journal article" date="2007" name="Nucleic Acids Res.">
        <title>C1D and hMtr4p associate with the human exosome subunit PM/Scl-100 and are involved in pre-rRNA processing.</title>
        <authorList>
            <person name="Schilders G."/>
            <person name="van Dijk E."/>
            <person name="Pruijn G.J.M."/>
        </authorList>
    </citation>
    <scope>FUNCTION</scope>
    <scope>INTERACTION WITH MPHOSPH6</scope>
</reference>
<reference key="12">
    <citation type="journal article" date="2009" name="Anal. Chem.">
        <title>Lys-N and trypsin cover complementary parts of the phosphoproteome in a refined SCX-based approach.</title>
        <authorList>
            <person name="Gauci S."/>
            <person name="Helbig A.O."/>
            <person name="Slijper M."/>
            <person name="Krijgsveld J."/>
            <person name="Heck A.J."/>
            <person name="Mohammed S."/>
        </authorList>
    </citation>
    <scope>ACETYLATION [LARGE SCALE ANALYSIS] AT ALA-2</scope>
    <scope>CLEAVAGE OF INITIATOR METHIONINE [LARGE SCALE ANALYSIS]</scope>
    <scope>IDENTIFICATION BY MASS SPECTROMETRY [LARGE SCALE ANALYSIS]</scope>
</reference>
<reference key="13">
    <citation type="journal article" date="2009" name="Science">
        <title>Lysine acetylation targets protein complexes and co-regulates major cellular functions.</title>
        <authorList>
            <person name="Choudhary C."/>
            <person name="Kumar C."/>
            <person name="Gnad F."/>
            <person name="Nielsen M.L."/>
            <person name="Rehman M."/>
            <person name="Walther T.C."/>
            <person name="Olsen J.V."/>
            <person name="Mann M."/>
        </authorList>
    </citation>
    <scope>ACETYLATION [LARGE SCALE ANALYSIS] AT LYS-51</scope>
    <scope>IDENTIFICATION BY MASS SPECTROMETRY [LARGE SCALE ANALYSIS]</scope>
</reference>
<reference key="14">
    <citation type="journal article" date="2011" name="BMC Syst. Biol.">
        <title>Initial characterization of the human central proteome.</title>
        <authorList>
            <person name="Burkard T.R."/>
            <person name="Planyavsky M."/>
            <person name="Kaupe I."/>
            <person name="Breitwieser F.P."/>
            <person name="Buerckstuemmer T."/>
            <person name="Bennett K.L."/>
            <person name="Superti-Furga G."/>
            <person name="Colinge J."/>
        </authorList>
    </citation>
    <scope>IDENTIFICATION BY MASS SPECTROMETRY [LARGE SCALE ANALYSIS]</scope>
</reference>
<reference key="15">
    <citation type="journal article" date="2011" name="Mol. Cell">
        <title>Interaction profiling identifies the human nuclear exosome targeting complex.</title>
        <authorList>
            <person name="Lubas M."/>
            <person name="Christensen M.S."/>
            <person name="Kristiansen M.S."/>
            <person name="Domanski M."/>
            <person name="Falkenby L.G."/>
            <person name="Lykke-Andersen S."/>
            <person name="Andersen J.S."/>
            <person name="Dziembowski A."/>
            <person name="Jensen T.H."/>
        </authorList>
    </citation>
    <scope>IDENTIFICATION IN A TRAMP-LIKE COMPLEX</scope>
    <scope>SUBUNIT</scope>
    <scope>SUBCELLULAR LOCATION</scope>
</reference>
<reference key="16">
    <citation type="journal article" date="2012" name="Biochem. Soc. Trans.">
        <title>Comparison of the yeast and human nuclear exosome complexes.</title>
        <authorList>
            <person name="Sloan K.E."/>
            <person name="Schneider C."/>
            <person name="Watkins N.J."/>
        </authorList>
    </citation>
    <scope>REVIEW ON RNA EXOSOMES</scope>
</reference>
<reference key="17">
    <citation type="journal article" date="2012" name="Mol. Cell. Proteomics">
        <title>Comparative large-scale characterisation of plant vs. mammal proteins reveals similar and idiosyncratic N-alpha acetylation features.</title>
        <authorList>
            <person name="Bienvenut W.V."/>
            <person name="Sumpton D."/>
            <person name="Martinez A."/>
            <person name="Lilla S."/>
            <person name="Espagne C."/>
            <person name="Meinnel T."/>
            <person name="Giglione C."/>
        </authorList>
    </citation>
    <scope>ACETYLATION [LARGE SCALE ANALYSIS] AT ALA-2</scope>
    <scope>CLEAVAGE OF INITIATOR METHIONINE [LARGE SCALE ANALYSIS]</scope>
    <scope>IDENTIFICATION BY MASS SPECTROMETRY [LARGE SCALE ANALYSIS]</scope>
</reference>
<reference key="18">
    <citation type="journal article" date="2013" name="J. Proteome Res.">
        <title>Toward a comprehensive characterization of a human cancer cell phosphoproteome.</title>
        <authorList>
            <person name="Zhou H."/>
            <person name="Di Palma S."/>
            <person name="Preisinger C."/>
            <person name="Peng M."/>
            <person name="Polat A.N."/>
            <person name="Heck A.J."/>
            <person name="Mohammed S."/>
        </authorList>
    </citation>
    <scope>PHOSPHORYLATION [LARGE SCALE ANALYSIS] AT SER-40</scope>
    <scope>IDENTIFICATION BY MASS SPECTROMETRY [LARGE SCALE ANALYSIS]</scope>
    <source>
        <tissue>Cervix carcinoma</tissue>
    </source>
</reference>
<reference key="19">
    <citation type="journal article" date="2015" name="Biochem. Biophys. Res. Commun.">
        <title>NVL2, a nucleolar AAA-ATPase, is associated with the nuclear exosome and is involved in pre-rRNA processing.</title>
        <authorList>
            <person name="Yoshikatsu Y."/>
            <person name="Ishida Y."/>
            <person name="Sudo H."/>
            <person name="Yuasa K."/>
            <person name="Tsuji A."/>
            <person name="Nagahama M."/>
        </authorList>
    </citation>
    <scope>INTERACTION WITH THE RNA EXOSOME COMPLEX</scope>
    <scope>INTERACTION WITH EXOSC10</scope>
</reference>
<reference key="20">
    <citation type="journal article" date="2015" name="Biochem. Biophys. Res. Commun.">
        <title>AAA-ATPase NVL2 acts on MTR4-exosome complex to dissociate the nucleolar protein WDR74.</title>
        <authorList>
            <person name="Hiraishi N."/>
            <person name="Ishida Y."/>
            <person name="Nagahama M."/>
        </authorList>
    </citation>
    <scope>INTERACTION WITH WDR74</scope>
</reference>
<reference key="21">
    <citation type="journal article" date="2015" name="Cell Rep.">
        <title>SUMO-2 orchestrates chromatin modifiers in response to DNA damage.</title>
        <authorList>
            <person name="Hendriks I.A."/>
            <person name="Treffers L.W."/>
            <person name="Verlaan-de Vries M."/>
            <person name="Olsen J.V."/>
            <person name="Vertegaal A.C."/>
        </authorList>
    </citation>
    <scope>SUMOYLATION [LARGE SCALE ANALYSIS] AT LYS-684</scope>
    <scope>IDENTIFICATION BY MASS SPECTROMETRY [LARGE SCALE ANALYSIS]</scope>
</reference>
<reference key="22">
    <citation type="journal article" date="2016" name="Mol. Cell">
        <title>Identification of a nuclear exosome decay pathway for processed transcripts.</title>
        <authorList>
            <person name="Meola N."/>
            <person name="Domanski M."/>
            <person name="Karadoulama E."/>
            <person name="Chen Y."/>
            <person name="Gentil C."/>
            <person name="Pultz D."/>
            <person name="Vitting-Seerup K."/>
            <person name="Lykke-Andersen S."/>
            <person name="Andersen J.S."/>
            <person name="Sandelin A."/>
            <person name="Jensen T.H."/>
        </authorList>
    </citation>
    <scope>SUBUNIT</scope>
    <scope>INTERACTION WITH ZFC3H1; ZCCHC8 AND RBM7</scope>
    <scope>FUNCTION</scope>
</reference>
<reference key="23">
    <citation type="journal article" date="2016" name="Nat. Commun.">
        <title>Structure of the RBM7-ZCCHC8 core of the NEXT complex reveals connections to splicing factors.</title>
        <authorList>
            <person name="Falk S."/>
            <person name="Finogenova K."/>
            <person name="Melko M."/>
            <person name="Benda C."/>
            <person name="Lykke-Andersen S."/>
            <person name="Jensen T.H."/>
            <person name="Conti E."/>
        </authorList>
    </citation>
    <scope>SUBUNIT</scope>
    <scope>INTERACTION WITH ZCCHC8</scope>
</reference>
<reference key="24">
    <citation type="journal article" date="2018" name="Elife">
        <title>Distinct and evolutionary conserved structural features of the human nuclear exosome complex.</title>
        <authorList>
            <person name="Gerlach P."/>
            <person name="Schuller J.M."/>
            <person name="Bonneau F."/>
            <person name="Basquin J."/>
            <person name="Reichelt P."/>
            <person name="Falk S."/>
            <person name="Conti E."/>
        </authorList>
    </citation>
    <scope>INTERACTION WITH THE RNA EXOSOME COMPLEX</scope>
</reference>
<reference key="25">
    <citation type="journal article" date="2017" name="Nat. Struct. Mol. Biol.">
        <title>Site-specific mapping of the human SUMO proteome reveals co-modification with phosphorylation.</title>
        <authorList>
            <person name="Hendriks I.A."/>
            <person name="Lyon D."/>
            <person name="Young C."/>
            <person name="Jensen L.J."/>
            <person name="Vertegaal A.C."/>
            <person name="Nielsen M.L."/>
        </authorList>
    </citation>
    <scope>SUMOYLATION [LARGE SCALE ANALYSIS] AT LYS-24; LYS-358; LYS-684 AND LYS-723</scope>
    <scope>IDENTIFICATION BY MASS SPECTROMETRY [LARGE SCALE ANALYSIS]</scope>
</reference>
<reference key="26">
    <citation type="journal article" date="2018" name="Biochem. Biophys. Res. Commun.">
        <title>WDR74 participates in an early cleavage of the pre-rRNA processing pathway in cooperation with the nucleolar AAA-ATPase NVL2.</title>
        <authorList>
            <person name="Hiraishi N."/>
            <person name="Ishida Y.I."/>
            <person name="Sudo H."/>
            <person name="Nagahama M."/>
        </authorList>
    </citation>
    <scope>FUNCTION</scope>
    <scope>INTERACTION WITH WDR74</scope>
</reference>
<reference key="27">
    <citation type="journal article" date="2018" name="RNA Biol.">
        <title>NRDE-2, the human homolog of fission yeast Nrl1, prevents DNA damage accumulation in human cells.</title>
        <authorList>
            <person name="Richard P."/>
            <person name="Ogami K."/>
            <person name="Chen Y."/>
            <person name="Feng S."/>
            <person name="Moresco J.J."/>
            <person name="Yates J.R. III"/>
            <person name="Manley J.L."/>
        </authorList>
    </citation>
    <scope>FUNCTION</scope>
    <scope>INTERACTION WITH NRDE2</scope>
</reference>
<reference key="28">
    <citation type="journal article" date="2019" name="RNA">
        <title>Human nuclear RNAi-defective 2 (NRDE2) is an essential RNA splicing factor.</title>
        <authorList>
            <person name="Jiao A.L."/>
            <person name="Perales R."/>
            <person name="Umbreit N.T."/>
            <person name="Haswell J.R."/>
            <person name="Piper M.E."/>
            <person name="Adams B.D."/>
            <person name="Pellman D."/>
            <person name="Kennedy S."/>
            <person name="Slack F.J."/>
        </authorList>
    </citation>
    <scope>INTERACTION WITH NRDE2</scope>
</reference>
<reference evidence="28 29" key="29">
    <citation type="journal article" date="2018" name="Cell">
        <title>Helicase-Dependent RNA Decay Illuminated by a Cryo-EM Structure of a Human Nuclear RNA Exosome-MTR4 Complex.</title>
        <authorList>
            <person name="Weick E.M."/>
            <person name="Puno M.R."/>
            <person name="Januszyk K."/>
            <person name="Zinder J.C."/>
            <person name="DiMattia M.A."/>
            <person name="Lima C.D."/>
        </authorList>
    </citation>
    <scope>STRUCTURE BY ELECTRON MICROSCOPY (3.45 ANGSTROMS) IN COMPLEX WITH NUCLEAR RNA EXOSOME COMPLEX AND DNA/RNA HETERODUPLEX</scope>
    <scope>CATALYTIC ACTIVITY</scope>
    <scope>FUNCTION</scope>
    <scope>ACTIVITY REGULATION</scope>
</reference>
<reference evidence="27" key="30">
    <citation type="journal article" date="2018" name="Proc. Natl. Acad. Sci. U.S.A.">
        <title>Structural basis for MTR4-ZCCHC8 interactions that stimulate the MTR4 helicase in the nuclear exosome-targeting complex.</title>
        <authorList>
            <person name="Puno M.R."/>
            <person name="Lima C.D."/>
        </authorList>
    </citation>
    <scope>X-RAY CRYSTALLOGRAPHY (2.20 ANGSTROMS) OF 71-600 AND 843-1042 IN COMPLEX WITH ZCCHC8 AND ATP</scope>
    <scope>INTERACTION WITH ZCCHC8</scope>
    <scope>CATALYTIC ACTIVITY</scope>
    <scope>FUNCTION</scope>
    <scope>MUTAGENESIS OF GLU-253</scope>
    <scope>ATP BINDING</scope>
    <scope>ACTIVITY REGULATION</scope>
</reference>
<reference evidence="30 31" key="31">
    <citation type="journal article" date="2019" name="Genes Dev.">
        <title>NRDE2 negatively regulates exosome functions by inhibiting MTR4 recruitment and exosome interaction.</title>
        <authorList>
            <person name="Wang J."/>
            <person name="Chen J."/>
            <person name="Wu G."/>
            <person name="Zhang H."/>
            <person name="Du X."/>
            <person name="Chen S."/>
            <person name="Zhang L."/>
            <person name="Wang K."/>
            <person name="Fan J."/>
            <person name="Gao S."/>
            <person name="Wu X."/>
            <person name="Zhang S."/>
            <person name="Kuai B."/>
            <person name="Zhao P."/>
            <person name="Chi B."/>
            <person name="Wang L."/>
            <person name="Li G."/>
            <person name="Wong C.C.L."/>
            <person name="Zhou Y."/>
            <person name="Li J."/>
            <person name="Yun C."/>
            <person name="Cheng H."/>
        </authorList>
    </citation>
    <scope>X-RAY CRYSTALLOGRAPHY (2.89 ANGSTROMS) OF 71-1042 IN COMPLEX WITH NRDE2</scope>
    <scope>INTERACTION WITH NCBP1; NRDE2; SRRT; ZFC3H1</scope>
    <scope>SUBCELLULAR LOCATION</scope>
    <scope>MUTAGENESIS OF ARG-658; GLU-697; ARG-743 AND 989-PHE-GLU-990</scope>
</reference>
<reference evidence="32" key="32">
    <citation type="journal article" date="2019" name="Nat. Commun.">
        <title>The MTR4 helicase recruits nuclear adaptors of the human RNA exosome using distinct arch-interacting motifs.</title>
        <authorList>
            <person name="Lingaraju M."/>
            <person name="Johnsen D."/>
            <person name="Schlundt A."/>
            <person name="Langer L.M."/>
            <person name="Basquin J."/>
            <person name="Sattler M."/>
            <person name="Heick Jensen T."/>
            <person name="Falk S."/>
            <person name="Conti E."/>
        </authorList>
    </citation>
    <scope>X-RAY CRYSTALLOGRAPHY (3.07 ANGSTROMS) OF 70-1042 IN COMPLEXES WITH NVL AND ATP</scope>
    <scope>INTERACTION WITH NVL AND ZCCHC8</scope>
    <scope>ATP BINDING</scope>
    <scope>MUTAGENESIS OF ARG-743</scope>
</reference>
<sequence>MADAFGDELFSVFEGDSTTAAGTKKDKEKDKGKWKGPPGSADKAGKRFDGKLQSESTNNGKNKRDVDFEGTDEPIFGKKPRIEESITEDLSLADLMPRVKVQSVETVEGCTHEVALPAEEDYLPLKPRVGKAAKEYPFILDAFQREAIQCVDNNQSVLVSAHTSAGKTVCAEYAIALALREKQRVIFTSPIKALSNQKYREMYEEFQDVGLMTGDVTINPTASCLVMTTEILRSMLYRGSEVMREVAWVIFDEIHYMRDSERGVVWEETIILLPDNVHYVFLSATIPNARQFAEWICHLHKQPCHVIYTDYRPTPLQHYIFPAGGDGLHLVVDENGDFREDNFNTAMQVLRDAGDLAKGDQKGRKGGTKGPSNVFKIVKMIMERNFQPVIIFSFSKKDCEAYALQMTKLDFNTDEEKKMVEEVFSNAIDCLSDEDKKLPQVEHVLPLLKRGIGIHHGGLLPILKETIEILFSEGLIKALFATETFAMGINMPARTVLFTNARKFDGKDFRWISSGEYIQMSGRAGRRGMDDRGIVILMVDEKMSPTIGKQLLKGSADPLNSAFHLTYNMVLNLLRVEEINPEYMLEKSFYQFQHYRAIPGVVEKVKNSEEQYNKIVIPNEESVVIYYKIRQQLAKLGKEIEEYIHKPKYCLPFLQPGRLVKVKNEGDDFGWGVVVNFSKKSNVKPNSGELDPLYVVEVLLRCSKESLKNSATEAAKPAKPDEKGEMQVVPVLVHLLSAISSVRLYIPKDLRPVDNRQSVLKSIQEVQKRFPDGIPLLDPIDDMGIQDQGLKKVIQKVEAFEHRMYSHPLHNDPNLETVYTLCEKKAQIAIDIKSAKRELKKARTVLQMDELKCRKRVLRRLGFATSSDVIEMKGRVACEISSADELLLTEMMFNGLFNDLSAEQATALLSCFVFQENSSEMPKLTEQLAGPLRQMQECAKRIAKVSAEAKLEIDEETYLSSFKPHLMDVVYTWATGATFAHICKMTDVFEGSIIRCMRRLEELLRQMCQAAKAIGNTELENKFAEGITKIKRDIVFAASLYL</sequence>
<proteinExistence type="evidence at protein level"/>
<keyword id="KW-0002">3D-structure</keyword>
<keyword id="KW-0007">Acetylation</keyword>
<keyword id="KW-0067">ATP-binding</keyword>
<keyword id="KW-0903">Direct protein sequencing</keyword>
<keyword id="KW-0227">DNA damage</keyword>
<keyword id="KW-0347">Helicase</keyword>
<keyword id="KW-0378">Hydrolase</keyword>
<keyword id="KW-1017">Isopeptide bond</keyword>
<keyword id="KW-0507">mRNA processing</keyword>
<keyword id="KW-0508">mRNA splicing</keyword>
<keyword id="KW-0547">Nucleotide-binding</keyword>
<keyword id="KW-0539">Nucleus</keyword>
<keyword id="KW-0597">Phosphoprotein</keyword>
<keyword id="KW-1267">Proteomics identification</keyword>
<keyword id="KW-1185">Reference proteome</keyword>
<keyword id="KW-0698">rRNA processing</keyword>
<keyword id="KW-0747">Spliceosome</keyword>
<keyword id="KW-0832">Ubl conjugation</keyword>
<dbReference type="EC" id="3.6.4.13" evidence="16"/>
<dbReference type="EMBL" id="D29641">
    <property type="protein sequence ID" value="BAA06124.2"/>
    <property type="status" value="ALT_INIT"/>
    <property type="molecule type" value="mRNA"/>
</dbReference>
<dbReference type="EMBL" id="BX640789">
    <property type="protein sequence ID" value="CAE45877.1"/>
    <property type="molecule type" value="mRNA"/>
</dbReference>
<dbReference type="EMBL" id="BC014669">
    <property type="protein sequence ID" value="AAH14669.2"/>
    <property type="molecule type" value="mRNA"/>
</dbReference>
<dbReference type="EMBL" id="BC028604">
    <property type="protein sequence ID" value="AAH28604.3"/>
    <property type="molecule type" value="mRNA"/>
</dbReference>
<dbReference type="EMBL" id="BC031779">
    <property type="protein sequence ID" value="AAH31779.1"/>
    <property type="molecule type" value="mRNA"/>
</dbReference>
<dbReference type="EMBL" id="BC065258">
    <property type="protein sequence ID" value="AAH65258.1"/>
    <property type="status" value="ALT_INIT"/>
    <property type="molecule type" value="mRNA"/>
</dbReference>
<dbReference type="EMBL" id="BC104996">
    <property type="protein sequence ID" value="AAI04997.1"/>
    <property type="molecule type" value="mRNA"/>
</dbReference>
<dbReference type="EMBL" id="BC113509">
    <property type="protein sequence ID" value="AAI13510.1"/>
    <property type="molecule type" value="mRNA"/>
</dbReference>
<dbReference type="CCDS" id="CCDS3967.1"/>
<dbReference type="RefSeq" id="NP_056175.3">
    <property type="nucleotide sequence ID" value="NM_015360.4"/>
</dbReference>
<dbReference type="PDB" id="6C90">
    <property type="method" value="X-ray"/>
    <property type="resolution" value="2.20 A"/>
    <property type="chains" value="A=71-600, A=843-1042"/>
</dbReference>
<dbReference type="PDB" id="6D6Q">
    <property type="method" value="EM"/>
    <property type="resolution" value="3.45 A"/>
    <property type="chains" value="M=1-1042"/>
</dbReference>
<dbReference type="PDB" id="6D6R">
    <property type="method" value="EM"/>
    <property type="resolution" value="3.45 A"/>
    <property type="chains" value="M=1-1042"/>
</dbReference>
<dbReference type="PDB" id="6IEG">
    <property type="method" value="X-ray"/>
    <property type="resolution" value="3.55 A"/>
    <property type="chains" value="A/B=71-1042"/>
</dbReference>
<dbReference type="PDB" id="6IEH">
    <property type="method" value="X-ray"/>
    <property type="resolution" value="2.89 A"/>
    <property type="chains" value="B=71-1042"/>
</dbReference>
<dbReference type="PDB" id="6RO1">
    <property type="method" value="X-ray"/>
    <property type="resolution" value="3.07 A"/>
    <property type="chains" value="A=70-1042"/>
</dbReference>
<dbReference type="PDB" id="7S7B">
    <property type="method" value="EM"/>
    <property type="resolution" value="4.06 A"/>
    <property type="chains" value="A/E=1-1042"/>
</dbReference>
<dbReference type="PDB" id="7S7C">
    <property type="method" value="EM"/>
    <property type="resolution" value="3.62 A"/>
    <property type="chains" value="A/E=1-1042"/>
</dbReference>
<dbReference type="PDB" id="7Z4Y">
    <property type="method" value="EM"/>
    <property type="resolution" value="4.50 A"/>
    <property type="chains" value="B/D=1-1042"/>
</dbReference>
<dbReference type="PDB" id="7Z4Z">
    <property type="method" value="EM"/>
    <property type="resolution" value="4.00 A"/>
    <property type="chains" value="B/D=1-1042"/>
</dbReference>
<dbReference type="PDB" id="7Z52">
    <property type="method" value="EM"/>
    <property type="resolution" value="3.40 A"/>
    <property type="chains" value="B=1-1042"/>
</dbReference>
<dbReference type="PDBsum" id="6C90"/>
<dbReference type="PDBsum" id="6D6Q"/>
<dbReference type="PDBsum" id="6D6R"/>
<dbReference type="PDBsum" id="6IEG"/>
<dbReference type="PDBsum" id="6IEH"/>
<dbReference type="PDBsum" id="6RO1"/>
<dbReference type="PDBsum" id="7S7B"/>
<dbReference type="PDBsum" id="7S7C"/>
<dbReference type="PDBsum" id="7Z4Y"/>
<dbReference type="PDBsum" id="7Z4Z"/>
<dbReference type="PDBsum" id="7Z52"/>
<dbReference type="EMDB" id="EMD-0127"/>
<dbReference type="EMDB" id="EMD-14510"/>
<dbReference type="EMDB" id="EMD-14511"/>
<dbReference type="EMDB" id="EMD-14513"/>
<dbReference type="EMDB" id="EMD-14514"/>
<dbReference type="EMDB" id="EMD-14515"/>
<dbReference type="EMDB" id="EMD-24882"/>
<dbReference type="EMDB" id="EMD-24883"/>
<dbReference type="EMDB" id="EMD-7808"/>
<dbReference type="EMDB" id="EMD-7809"/>
<dbReference type="SMR" id="P42285"/>
<dbReference type="BioGRID" id="117064">
    <property type="interactions" value="253"/>
</dbReference>
<dbReference type="ComplexPortal" id="CPX-2735">
    <property type="entry name" value="Nuclear exosome targeting complex"/>
</dbReference>
<dbReference type="ComplexPortal" id="CPX-2740">
    <property type="entry name" value="TRAMP complex, TENT4B-ZCCHC7 variant"/>
</dbReference>
<dbReference type="ComplexPortal" id="CPX-2749">
    <property type="entry name" value="TRAMP complex, TENT4A-ZCCHC7 variant"/>
</dbReference>
<dbReference type="ComplexPortal" id="CPX-2750">
    <property type="entry name" value="Poly(A) tail exosome targeting complex, RBM26 variant"/>
</dbReference>
<dbReference type="ComplexPortal" id="CPX-2752">
    <property type="entry name" value="Poly(A) tail exosome targeting complex, RBM27 variant"/>
</dbReference>
<dbReference type="CORUM" id="P42285"/>
<dbReference type="ELM" id="P42285"/>
<dbReference type="FunCoup" id="P42285">
    <property type="interactions" value="4336"/>
</dbReference>
<dbReference type="IntAct" id="P42285">
    <property type="interactions" value="115"/>
</dbReference>
<dbReference type="MINT" id="P42285"/>
<dbReference type="STRING" id="9606.ENSP00000230640"/>
<dbReference type="ChEMBL" id="CHEMBL4105889"/>
<dbReference type="GlyGen" id="P42285">
    <property type="glycosylation" value="1 site, 1 O-linked glycan (1 site)"/>
</dbReference>
<dbReference type="iPTMnet" id="P42285"/>
<dbReference type="MetOSite" id="P42285"/>
<dbReference type="PhosphoSitePlus" id="P42285"/>
<dbReference type="SwissPalm" id="P42285"/>
<dbReference type="BioMuta" id="SKIV2L2"/>
<dbReference type="DMDM" id="71153172"/>
<dbReference type="jPOST" id="P42285"/>
<dbReference type="MassIVE" id="P42285"/>
<dbReference type="PaxDb" id="9606-ENSP00000230640"/>
<dbReference type="PeptideAtlas" id="P42285"/>
<dbReference type="ProteomicsDB" id="55503"/>
<dbReference type="Pumba" id="P42285"/>
<dbReference type="Antibodypedia" id="23424">
    <property type="antibodies" value="215 antibodies from 30 providers"/>
</dbReference>
<dbReference type="DNASU" id="23517"/>
<dbReference type="Ensembl" id="ENST00000230640.10">
    <property type="protein sequence ID" value="ENSP00000230640.5"/>
    <property type="gene ID" value="ENSG00000039123.16"/>
</dbReference>
<dbReference type="GeneID" id="23517"/>
<dbReference type="KEGG" id="hsa:23517"/>
<dbReference type="MANE-Select" id="ENST00000230640.10">
    <property type="protein sequence ID" value="ENSP00000230640.5"/>
    <property type="RefSeq nucleotide sequence ID" value="NM_015360.5"/>
    <property type="RefSeq protein sequence ID" value="NP_056175.3"/>
</dbReference>
<dbReference type="UCSC" id="uc003jpy.5">
    <property type="organism name" value="human"/>
</dbReference>
<dbReference type="AGR" id="HGNC:18734"/>
<dbReference type="CTD" id="23517"/>
<dbReference type="DisGeNET" id="23517"/>
<dbReference type="GeneCards" id="MTREX"/>
<dbReference type="HGNC" id="HGNC:18734">
    <property type="gene designation" value="MTREX"/>
</dbReference>
<dbReference type="HPA" id="ENSG00000039123">
    <property type="expression patterns" value="Low tissue specificity"/>
</dbReference>
<dbReference type="MIM" id="618122">
    <property type="type" value="gene"/>
</dbReference>
<dbReference type="neXtProt" id="NX_P42285"/>
<dbReference type="OpenTargets" id="ENSG00000039123"/>
<dbReference type="PharmGKB" id="PA134901921"/>
<dbReference type="VEuPathDB" id="HostDB:ENSG00000039123"/>
<dbReference type="eggNOG" id="KOG0948">
    <property type="taxonomic scope" value="Eukaryota"/>
</dbReference>
<dbReference type="GeneTree" id="ENSGT00940000156183"/>
<dbReference type="HOGENOM" id="CLU_002902_0_1_1"/>
<dbReference type="InParanoid" id="P42285"/>
<dbReference type="OMA" id="IMLKNYN"/>
<dbReference type="OrthoDB" id="64767at2759"/>
<dbReference type="PAN-GO" id="P42285">
    <property type="GO annotations" value="4 GO annotations based on evolutionary models"/>
</dbReference>
<dbReference type="PhylomeDB" id="P42285"/>
<dbReference type="TreeFam" id="TF300597"/>
<dbReference type="PathwayCommons" id="P42285"/>
<dbReference type="Reactome" id="R-HSA-6791226">
    <property type="pathway name" value="Major pathway of rRNA processing in the nucleolus and cytosol"/>
</dbReference>
<dbReference type="Reactome" id="R-HSA-72163">
    <property type="pathway name" value="mRNA Splicing - Major Pathway"/>
</dbReference>
<dbReference type="Reactome" id="R-HSA-9843970">
    <property type="pathway name" value="Regulation of endogenous retroelements by the Human Silencing Hub (HUSH) complex"/>
</dbReference>
<dbReference type="SignaLink" id="P42285"/>
<dbReference type="BioGRID-ORCS" id="23517">
    <property type="hits" value="802 hits in 1155 CRISPR screens"/>
</dbReference>
<dbReference type="CD-CODE" id="91857CE7">
    <property type="entry name" value="Nucleolus"/>
</dbReference>
<dbReference type="ChiTaRS" id="SKIV2L2">
    <property type="organism name" value="human"/>
</dbReference>
<dbReference type="GeneWiki" id="SKIV2L2"/>
<dbReference type="GenomeRNAi" id="23517"/>
<dbReference type="Pharos" id="P42285">
    <property type="development level" value="Tbio"/>
</dbReference>
<dbReference type="PRO" id="PR:P42285"/>
<dbReference type="Proteomes" id="UP000005640">
    <property type="component" value="Chromosome 5"/>
</dbReference>
<dbReference type="RNAct" id="P42285">
    <property type="molecule type" value="protein"/>
</dbReference>
<dbReference type="Bgee" id="ENSG00000039123">
    <property type="expression patterns" value="Expressed in calcaneal tendon and 208 other cell types or tissues"/>
</dbReference>
<dbReference type="ExpressionAtlas" id="P42285">
    <property type="expression patterns" value="baseline and differential"/>
</dbReference>
<dbReference type="GO" id="GO:0071013">
    <property type="term" value="C:catalytic step 2 spliceosome"/>
    <property type="evidence" value="ECO:0000314"/>
    <property type="project" value="UniProtKB"/>
</dbReference>
<dbReference type="GO" id="GO:0016607">
    <property type="term" value="C:nuclear speck"/>
    <property type="evidence" value="ECO:0007669"/>
    <property type="project" value="UniProtKB-SubCell"/>
</dbReference>
<dbReference type="GO" id="GO:0005730">
    <property type="term" value="C:nucleolus"/>
    <property type="evidence" value="ECO:0007669"/>
    <property type="project" value="UniProtKB-SubCell"/>
</dbReference>
<dbReference type="GO" id="GO:0005654">
    <property type="term" value="C:nucleoplasm"/>
    <property type="evidence" value="ECO:0000314"/>
    <property type="project" value="HPA"/>
</dbReference>
<dbReference type="GO" id="GO:0005634">
    <property type="term" value="C:nucleus"/>
    <property type="evidence" value="ECO:0000314"/>
    <property type="project" value="UniProtKB"/>
</dbReference>
<dbReference type="GO" id="GO:0031499">
    <property type="term" value="C:TRAMP complex"/>
    <property type="evidence" value="ECO:0000314"/>
    <property type="project" value="UniProtKB"/>
</dbReference>
<dbReference type="GO" id="GO:0005524">
    <property type="term" value="F:ATP binding"/>
    <property type="evidence" value="ECO:0000314"/>
    <property type="project" value="UniProtKB"/>
</dbReference>
<dbReference type="GO" id="GO:0016887">
    <property type="term" value="F:ATP hydrolysis activity"/>
    <property type="evidence" value="ECO:0007669"/>
    <property type="project" value="RHEA"/>
</dbReference>
<dbReference type="GO" id="GO:0003723">
    <property type="term" value="F:RNA binding"/>
    <property type="evidence" value="ECO:0007005"/>
    <property type="project" value="UniProtKB"/>
</dbReference>
<dbReference type="GO" id="GO:0003724">
    <property type="term" value="F:RNA helicase activity"/>
    <property type="evidence" value="ECO:0000314"/>
    <property type="project" value="UniProtKB"/>
</dbReference>
<dbReference type="GO" id="GO:0006974">
    <property type="term" value="P:DNA damage response"/>
    <property type="evidence" value="ECO:0000315"/>
    <property type="project" value="UniProtKB"/>
</dbReference>
<dbReference type="GO" id="GO:0000460">
    <property type="term" value="P:maturation of 5.8S rRNA"/>
    <property type="evidence" value="ECO:0000315"/>
    <property type="project" value="UniProtKB"/>
</dbReference>
<dbReference type="GO" id="GO:0000398">
    <property type="term" value="P:mRNA splicing, via spliceosome"/>
    <property type="evidence" value="ECO:0000305"/>
    <property type="project" value="UniProtKB"/>
</dbReference>
<dbReference type="GO" id="GO:0006401">
    <property type="term" value="P:RNA catabolic process"/>
    <property type="evidence" value="ECO:0000314"/>
    <property type="project" value="UniProtKB"/>
</dbReference>
<dbReference type="GO" id="GO:0006364">
    <property type="term" value="P:rRNA processing"/>
    <property type="evidence" value="ECO:0000315"/>
    <property type="project" value="UniProtKB"/>
</dbReference>
<dbReference type="GO" id="GO:0016076">
    <property type="term" value="P:snRNA catabolic process"/>
    <property type="evidence" value="ECO:0000250"/>
    <property type="project" value="UniProtKB"/>
</dbReference>
<dbReference type="CDD" id="cd18024">
    <property type="entry name" value="DEXHc_Mtr4-like"/>
    <property type="match status" value="1"/>
</dbReference>
<dbReference type="CDD" id="cd13154">
    <property type="entry name" value="KOW_Mtr4"/>
    <property type="match status" value="1"/>
</dbReference>
<dbReference type="CDD" id="cd18795">
    <property type="entry name" value="SF2_C_Ski2"/>
    <property type="match status" value="1"/>
</dbReference>
<dbReference type="FunFam" id="3.40.50.300:FF:000083">
    <property type="entry name" value="ATP-dependent RNA helicase DOB1"/>
    <property type="match status" value="1"/>
</dbReference>
<dbReference type="FunFam" id="3.40.50.300:FF:000141">
    <property type="entry name" value="ATP-dependent RNA helicase DOB1"/>
    <property type="match status" value="1"/>
</dbReference>
<dbReference type="FunFam" id="2.40.30.300:FF:000001">
    <property type="entry name" value="Mtr4 exosome RNA helicase"/>
    <property type="match status" value="1"/>
</dbReference>
<dbReference type="FunFam" id="1.10.3380.30:FF:000004">
    <property type="entry name" value="Superkiller viralicidic activity 2-like 2"/>
    <property type="match status" value="1"/>
</dbReference>
<dbReference type="FunFam" id="1.10.3380.30:FF:000002">
    <property type="entry name" value="superkiller viralicidic activity 2-like 2"/>
    <property type="match status" value="1"/>
</dbReference>
<dbReference type="Gene3D" id="1.10.3380.30">
    <property type="match status" value="2"/>
</dbReference>
<dbReference type="Gene3D" id="2.40.30.300">
    <property type="match status" value="1"/>
</dbReference>
<dbReference type="Gene3D" id="3.40.50.300">
    <property type="entry name" value="P-loop containing nucleotide triphosphate hydrolases"/>
    <property type="match status" value="2"/>
</dbReference>
<dbReference type="InterPro" id="IPR011545">
    <property type="entry name" value="DEAD/DEAH_box_helicase_dom"/>
</dbReference>
<dbReference type="InterPro" id="IPR014001">
    <property type="entry name" value="Helicase_ATP-bd"/>
</dbReference>
<dbReference type="InterPro" id="IPR001650">
    <property type="entry name" value="Helicase_C-like"/>
</dbReference>
<dbReference type="InterPro" id="IPR048392">
    <property type="entry name" value="MTR4-like_stalk"/>
</dbReference>
<dbReference type="InterPro" id="IPR025696">
    <property type="entry name" value="MTR4_beta-barrel"/>
</dbReference>
<dbReference type="InterPro" id="IPR027417">
    <property type="entry name" value="P-loop_NTPase"/>
</dbReference>
<dbReference type="InterPro" id="IPR050699">
    <property type="entry name" value="RNA-DNA_Helicase"/>
</dbReference>
<dbReference type="InterPro" id="IPR016438">
    <property type="entry name" value="SKI2-like"/>
</dbReference>
<dbReference type="InterPro" id="IPR012961">
    <property type="entry name" value="Ski2/MTR4_C"/>
</dbReference>
<dbReference type="PANTHER" id="PTHR12131">
    <property type="entry name" value="ATP-DEPENDENT RNA AND DNA HELICASE"/>
    <property type="match status" value="1"/>
</dbReference>
<dbReference type="PANTHER" id="PTHR12131:SF7">
    <property type="entry name" value="EXOSOME RNA HELICASE MTR4"/>
    <property type="match status" value="1"/>
</dbReference>
<dbReference type="Pfam" id="PF00270">
    <property type="entry name" value="DEAD"/>
    <property type="match status" value="1"/>
</dbReference>
<dbReference type="Pfam" id="PF08148">
    <property type="entry name" value="DSHCT"/>
    <property type="match status" value="1"/>
</dbReference>
<dbReference type="Pfam" id="PF00271">
    <property type="entry name" value="Helicase_C"/>
    <property type="match status" value="1"/>
</dbReference>
<dbReference type="Pfam" id="PF21408">
    <property type="entry name" value="MTR4-like_stalk"/>
    <property type="match status" value="1"/>
</dbReference>
<dbReference type="Pfam" id="PF13234">
    <property type="entry name" value="MTR4_beta-barrel"/>
    <property type="match status" value="1"/>
</dbReference>
<dbReference type="PIRSF" id="PIRSF005198">
    <property type="entry name" value="Antiviral_helicase_SKI2"/>
    <property type="match status" value="1"/>
</dbReference>
<dbReference type="SMART" id="SM00487">
    <property type="entry name" value="DEXDc"/>
    <property type="match status" value="1"/>
</dbReference>
<dbReference type="SMART" id="SM01142">
    <property type="entry name" value="DSHCT"/>
    <property type="match status" value="1"/>
</dbReference>
<dbReference type="SMART" id="SM00490">
    <property type="entry name" value="HELICc"/>
    <property type="match status" value="1"/>
</dbReference>
<dbReference type="SUPFAM" id="SSF52540">
    <property type="entry name" value="P-loop containing nucleoside triphosphate hydrolases"/>
    <property type="match status" value="1"/>
</dbReference>
<dbReference type="PROSITE" id="PS51192">
    <property type="entry name" value="HELICASE_ATP_BIND_1"/>
    <property type="match status" value="1"/>
</dbReference>
<dbReference type="PROSITE" id="PS51194">
    <property type="entry name" value="HELICASE_CTER"/>
    <property type="match status" value="1"/>
</dbReference>
<comment type="function">
    <text evidence="9 10 13 15 16 17 18">Catalyzes the ATP-dependent unwinding of RNA duplexes with a single-stranded 3' RNA extension (PubMed:27871484, PubMed:29844170, PubMed:29906447). Central subunit of many protein complexes, namely TRAMP-like, nuclear exosome targeting (NEXT) and poly(A) tail exosome targeting (PAXT) (PubMed:21855801, PubMed:27871484, PubMed:29844170). NEXT functions as an RNA exosome cofactor that directs a subset of non-coding short-lived RNAs for exosomal degradation. NEXT is involved in surveillance and turnover of aberrant transcripts and non-coding RNAs (PubMed:27871484, PubMed:29844170). PAXT directs a subset of long and polyadenylated poly(A) RNAs for exosomal degradation. The RNA exosome is fundamental for the degradation of RNA in eukaryotic nuclei. Substrate targeting is facilitated by its cofactor ZCCHC8, which links to RNA-binding protein adapters (PubMed:27871484). Associated with the RNA exosome complex and involved in the 3'-processing of the 7S pre-RNA to the mature 5.8S rRNA (PubMed:17412707, PubMed:29107693). May be involved in pre-mRNA splicing. In the context of NEXT complex can also in vitro unwind DNA:RNA heteroduplexes with a 3' poly (A) RNA tracking strand (PubMed:29844170). Can promote unwinding and degradation of structured RNA substrates when associated with the nuclear exosome and its cofactors. Can displace a DNA strand while translocating on RNA to ultimately degrade the RNA within a DNA/RNA heteroduplex (PubMed:29906447). Plays a role in DNA damage response (PubMed:29902117).</text>
</comment>
<comment type="catalytic activity">
    <reaction evidence="16 18">
        <text>ATP + H2O = ADP + phosphate + H(+)</text>
        <dbReference type="Rhea" id="RHEA:13065"/>
        <dbReference type="ChEBI" id="CHEBI:15377"/>
        <dbReference type="ChEBI" id="CHEBI:15378"/>
        <dbReference type="ChEBI" id="CHEBI:30616"/>
        <dbReference type="ChEBI" id="CHEBI:43474"/>
        <dbReference type="ChEBI" id="CHEBI:456216"/>
        <dbReference type="EC" id="3.6.4.13"/>
    </reaction>
    <physiologicalReaction direction="left-to-right" evidence="16">
        <dbReference type="Rhea" id="RHEA:13066"/>
    </physiologicalReaction>
</comment>
<comment type="activity regulation">
    <text evidence="16 18">Activated when MTREX is incorporated into NEXT complex an the nuclear RNA exosome complex.</text>
</comment>
<comment type="subunit">
    <text evidence="5 7 8 9 10 11 12 13 14 15 16 17 18 19 20 21">Component of a TRAMP-like complex, an ATP-dependent exosome regulatory complex consisting of a helicase (MTREX), an oligadenylate polymerase (TENT4B or TENT4A), and a substrate specific RNA-binding factor (ZCCHC7 or ZCCHC8). Several TRAMP-like complexes exist with specific compositions and are associated with nuclear, or nucleolar RNA exosomes (PubMed:21855801). Identified in the spliceosome C complex. Component of the poly(A) tail exosome targeting (PAXT) complex made of PABPN1, ZFC3H1 and MTREX that directs a subset of long and polyadenylated poly(A) RNAs for exosomal degradation (PubMed:27871484). Component of the nuclear exosome targeting (NEXT) complex composed of MTREX, ZCCHC8, and RBM7 that directs a subset of non-coding short-lived RNAs for exosomal degradation (PubMed:27871484, PubMed:27905398). Interacts with ZCCHC8; this interaction bridges the interaction between RBM7 and MTREX (PubMed:16263084, PubMed:27905398, PubMed:29844170, PubMed:31358741). Binds to ZFC3H1 and RBM7 in a RNase-insensitive manner (PubMed:27871484). Interacts with EXOSC10; the interaction mediates the association of MTREX with nuclear RNA exosomes (PubMed:26166824). Interacts with isoform 1 of NVL in an ATP-dependent manner; the interaction is required to associate NVL with nuclear RNA exosome (PubMed:11991638, PubMed:16263084, PubMed:16782053, PubMed:21855801, PubMed:26166824, PubMed:27871484, PubMed:27905398, PubMed:31358741). Interacts with WDR74; the interaction dissociation in a late stage of rRNA synthesis is required for appropriate maturation of pre-60S particles and depends on the ATPase activity of NVL (PubMed:26456651, PubMed:29107693). Interacts with MPHOSPH6 (PubMed:17412707). Interacts with the RNA cap-binding complex proteins NCBP1 and SRRT (PubMed:30842217). Interacts with NRDE2; the interaction is direct and negatively regulates MTREX function in exosomal degradation by changing its conformation precluding interaction with ZFC3H1, the RNA cap-binding complex proteins NCBP1 and SRRT, and association with the exosome (PubMed:29902117, PubMed:30538148, PubMed:30842217). Associates with the RNA exosome complex (PubMed:30047866, PubMed:29906447).</text>
</comment>
<comment type="interaction">
    <interactant intactId="EBI-347612">
        <id>P42285</id>
    </interactant>
    <interactant intactId="EBI-373187">
        <id>Q99547</id>
        <label>MPHOSPH6</label>
    </interactant>
    <organismsDiffer>false</organismsDiffer>
    <experiments>3</experiments>
</comment>
<comment type="subcellular location">
    <subcellularLocation>
        <location evidence="20">Nucleus</location>
        <location evidence="20">Nucleoplasm</location>
    </subcellularLocation>
    <subcellularLocation>
        <location evidence="6">Nucleus</location>
        <location evidence="6">Nucleolus</location>
    </subcellularLocation>
    <subcellularLocation>
        <location evidence="8">Nucleus</location>
    </subcellularLocation>
    <subcellularLocation>
        <location evidence="20">Nucleus speckle</location>
    </subcellularLocation>
</comment>
<comment type="similarity">
    <text evidence="25">Belongs to the helicase family. SKI2 subfamily.</text>
</comment>
<comment type="sequence caution" evidence="25">
    <conflict type="erroneous initiation">
        <sequence resource="EMBL-CDS" id="AAH65258"/>
    </conflict>
    <text>Extended N-terminus.</text>
</comment>
<comment type="sequence caution" evidence="25">
    <conflict type="erroneous initiation">
        <sequence resource="EMBL-CDS" id="BAA06124"/>
    </conflict>
    <text>Extended N-terminus.</text>
</comment>
<evidence type="ECO:0000250" key="1">
    <source>
        <dbReference type="UniProtKB" id="Q9CZU3"/>
    </source>
</evidence>
<evidence type="ECO:0000255" key="2">
    <source>
        <dbReference type="PROSITE-ProRule" id="PRU00541"/>
    </source>
</evidence>
<evidence type="ECO:0000255" key="3">
    <source>
        <dbReference type="PROSITE-ProRule" id="PRU00542"/>
    </source>
</evidence>
<evidence type="ECO:0000256" key="4">
    <source>
        <dbReference type="SAM" id="MobiDB-lite"/>
    </source>
</evidence>
<evidence type="ECO:0000269" key="5">
    <source>
    </source>
</evidence>
<evidence type="ECO:0000269" key="6">
    <source>
    </source>
</evidence>
<evidence type="ECO:0000269" key="7">
    <source>
    </source>
</evidence>
<evidence type="ECO:0000269" key="8">
    <source>
    </source>
</evidence>
<evidence type="ECO:0000269" key="9">
    <source>
    </source>
</evidence>
<evidence type="ECO:0000269" key="10">
    <source>
    </source>
</evidence>
<evidence type="ECO:0000269" key="11">
    <source>
    </source>
</evidence>
<evidence type="ECO:0000269" key="12">
    <source>
    </source>
</evidence>
<evidence type="ECO:0000269" key="13">
    <source>
    </source>
</evidence>
<evidence type="ECO:0000269" key="14">
    <source>
    </source>
</evidence>
<evidence type="ECO:0000269" key="15">
    <source>
    </source>
</evidence>
<evidence type="ECO:0000269" key="16">
    <source>
    </source>
</evidence>
<evidence type="ECO:0000269" key="17">
    <source>
    </source>
</evidence>
<evidence type="ECO:0000269" key="18">
    <source>
    </source>
</evidence>
<evidence type="ECO:0000269" key="19">
    <source>
    </source>
</evidence>
<evidence type="ECO:0000269" key="20">
    <source>
    </source>
</evidence>
<evidence type="ECO:0000269" key="21">
    <source>
    </source>
</evidence>
<evidence type="ECO:0000269" key="22">
    <source ref="6"/>
</evidence>
<evidence type="ECO:0000303" key="23">
    <source>
    </source>
</evidence>
<evidence type="ECO:0000303" key="24">
    <source>
    </source>
</evidence>
<evidence type="ECO:0000305" key="25"/>
<evidence type="ECO:0000312" key="26">
    <source>
        <dbReference type="HGNC" id="HGNC:18734"/>
    </source>
</evidence>
<evidence type="ECO:0007744" key="27">
    <source>
        <dbReference type="PDB" id="6C90"/>
    </source>
</evidence>
<evidence type="ECO:0007744" key="28">
    <source>
        <dbReference type="PDB" id="6D6Q"/>
    </source>
</evidence>
<evidence type="ECO:0007744" key="29">
    <source>
        <dbReference type="PDB" id="6D6R"/>
    </source>
</evidence>
<evidence type="ECO:0007744" key="30">
    <source>
        <dbReference type="PDB" id="6IEG"/>
    </source>
</evidence>
<evidence type="ECO:0007744" key="31">
    <source>
        <dbReference type="PDB" id="6IEH"/>
    </source>
</evidence>
<evidence type="ECO:0007744" key="32">
    <source>
        <dbReference type="PDB" id="6RO1"/>
    </source>
</evidence>
<evidence type="ECO:0007744" key="33">
    <source>
    </source>
</evidence>
<evidence type="ECO:0007744" key="34">
    <source>
    </source>
</evidence>
<evidence type="ECO:0007744" key="35">
    <source>
    </source>
</evidence>
<evidence type="ECO:0007744" key="36">
    <source>
    </source>
</evidence>
<evidence type="ECO:0007744" key="37">
    <source>
    </source>
</evidence>
<evidence type="ECO:0007744" key="38">
    <source>
    </source>
</evidence>
<evidence type="ECO:0007829" key="39">
    <source>
        <dbReference type="PDB" id="6C90"/>
    </source>
</evidence>
<evidence type="ECO:0007829" key="40">
    <source>
        <dbReference type="PDB" id="6D6Q"/>
    </source>
</evidence>
<evidence type="ECO:0007829" key="41">
    <source>
        <dbReference type="PDB" id="6IEH"/>
    </source>
</evidence>
<evidence type="ECO:0007829" key="42">
    <source>
        <dbReference type="PDB" id="6RO1"/>
    </source>
</evidence>
<evidence type="ECO:0007829" key="43">
    <source>
        <dbReference type="PDB" id="7Z52"/>
    </source>
</evidence>
<name>MTREX_HUMAN</name>
<protein>
    <recommendedName>
        <fullName evidence="25">Exosome RNA helicase MTR4</fullName>
        <ecNumber evidence="16">3.6.4.13</ecNumber>
    </recommendedName>
    <alternativeName>
        <fullName evidence="23">ATP-dependent RNA helicase DOB1</fullName>
    </alternativeName>
    <alternativeName>
        <fullName>ATP-dependent RNA helicase SKIV2L2</fullName>
    </alternativeName>
    <alternativeName>
        <fullName>Superkiller viralicidic activity 2-like 2</fullName>
    </alternativeName>
    <alternativeName>
        <fullName>TRAMP-like complex helicase</fullName>
    </alternativeName>
</protein>
<gene>
    <name evidence="26" type="primary">MTREX</name>
    <name evidence="23" type="synonym">DOB1</name>
    <name type="synonym">KIAA0052</name>
    <name evidence="24" type="synonym">MTR4</name>
    <name type="synonym">SKIV2L2</name>
</gene>